<reference key="1">
    <citation type="journal article" date="1995" name="Science">
        <title>Whole-genome random sequencing and assembly of Haemophilus influenzae Rd.</title>
        <authorList>
            <person name="Fleischmann R.D."/>
            <person name="Adams M.D."/>
            <person name="White O."/>
            <person name="Clayton R.A."/>
            <person name="Kirkness E.F."/>
            <person name="Kerlavage A.R."/>
            <person name="Bult C.J."/>
            <person name="Tomb J.-F."/>
            <person name="Dougherty B.A."/>
            <person name="Merrick J.M."/>
            <person name="McKenney K."/>
            <person name="Sutton G.G."/>
            <person name="FitzHugh W."/>
            <person name="Fields C.A."/>
            <person name="Gocayne J.D."/>
            <person name="Scott J.D."/>
            <person name="Shirley R."/>
            <person name="Liu L.-I."/>
            <person name="Glodek A."/>
            <person name="Kelley J.M."/>
            <person name="Weidman J.F."/>
            <person name="Phillips C.A."/>
            <person name="Spriggs T."/>
            <person name="Hedblom E."/>
            <person name="Cotton M.D."/>
            <person name="Utterback T.R."/>
            <person name="Hanna M.C."/>
            <person name="Nguyen D.T."/>
            <person name="Saudek D.M."/>
            <person name="Brandon R.C."/>
            <person name="Fine L.D."/>
            <person name="Fritchman J.L."/>
            <person name="Fuhrmann J.L."/>
            <person name="Geoghagen N.S.M."/>
            <person name="Gnehm C.L."/>
            <person name="McDonald L.A."/>
            <person name="Small K.V."/>
            <person name="Fraser C.M."/>
            <person name="Smith H.O."/>
            <person name="Venter J.C."/>
        </authorList>
    </citation>
    <scope>NUCLEOTIDE SEQUENCE [LARGE SCALE GENOMIC DNA]</scope>
    <source>
        <strain>ATCC 51907 / DSM 11121 / KW20 / Rd</strain>
    </source>
</reference>
<organism>
    <name type="scientific">Haemophilus influenzae (strain ATCC 51907 / DSM 11121 / KW20 / Rd)</name>
    <dbReference type="NCBI Taxonomy" id="71421"/>
    <lineage>
        <taxon>Bacteria</taxon>
        <taxon>Pseudomonadati</taxon>
        <taxon>Pseudomonadota</taxon>
        <taxon>Gammaproteobacteria</taxon>
        <taxon>Pasteurellales</taxon>
        <taxon>Pasteurellaceae</taxon>
        <taxon>Haemophilus</taxon>
    </lineage>
</organism>
<accession>P45311</accession>
<gene>
    <name evidence="1" type="primary">moaA</name>
    <name type="ordered locus">HI_1676</name>
</gene>
<proteinExistence type="inferred from homology"/>
<name>MOAA_HAEIN</name>
<protein>
    <recommendedName>
        <fullName evidence="1">GTP 3',8-cyclase</fullName>
        <ecNumber evidence="1">4.1.99.22</ecNumber>
    </recommendedName>
    <alternativeName>
        <fullName evidence="1">Molybdenum cofactor biosynthesis protein A</fullName>
    </alternativeName>
</protein>
<dbReference type="EC" id="4.1.99.22" evidence="1"/>
<dbReference type="EMBL" id="L42023">
    <property type="protein sequence ID" value="AAC23321.1"/>
    <property type="molecule type" value="Genomic_DNA"/>
</dbReference>
<dbReference type="PIR" id="B64136">
    <property type="entry name" value="B64136"/>
</dbReference>
<dbReference type="RefSeq" id="NP_439818.1">
    <property type="nucleotide sequence ID" value="NC_000907.1"/>
</dbReference>
<dbReference type="SMR" id="P45311"/>
<dbReference type="STRING" id="71421.HI_1676"/>
<dbReference type="EnsemblBacteria" id="AAC23321">
    <property type="protein sequence ID" value="AAC23321"/>
    <property type="gene ID" value="HI_1676"/>
</dbReference>
<dbReference type="KEGG" id="hin:HI_1676"/>
<dbReference type="PATRIC" id="fig|71421.8.peg.1755"/>
<dbReference type="eggNOG" id="COG2896">
    <property type="taxonomic scope" value="Bacteria"/>
</dbReference>
<dbReference type="HOGENOM" id="CLU_009273_0_1_6"/>
<dbReference type="OrthoDB" id="9763993at2"/>
<dbReference type="PhylomeDB" id="P45311"/>
<dbReference type="BioCyc" id="HINF71421:G1GJ1-1691-MONOMER"/>
<dbReference type="UniPathway" id="UPA00344"/>
<dbReference type="Proteomes" id="UP000000579">
    <property type="component" value="Chromosome"/>
</dbReference>
<dbReference type="GO" id="GO:0051539">
    <property type="term" value="F:4 iron, 4 sulfur cluster binding"/>
    <property type="evidence" value="ECO:0007669"/>
    <property type="project" value="UniProtKB-UniRule"/>
</dbReference>
<dbReference type="GO" id="GO:0061799">
    <property type="term" value="F:cyclic pyranopterin monophosphate synthase activity"/>
    <property type="evidence" value="ECO:0000318"/>
    <property type="project" value="GO_Central"/>
</dbReference>
<dbReference type="GO" id="GO:0061798">
    <property type="term" value="F:GTP 3',8'-cyclase activity"/>
    <property type="evidence" value="ECO:0000318"/>
    <property type="project" value="GO_Central"/>
</dbReference>
<dbReference type="GO" id="GO:0005525">
    <property type="term" value="F:GTP binding"/>
    <property type="evidence" value="ECO:0007669"/>
    <property type="project" value="UniProtKB-UniRule"/>
</dbReference>
<dbReference type="GO" id="GO:0046872">
    <property type="term" value="F:metal ion binding"/>
    <property type="evidence" value="ECO:0007669"/>
    <property type="project" value="UniProtKB-KW"/>
</dbReference>
<dbReference type="GO" id="GO:1904047">
    <property type="term" value="F:S-adenosyl-L-methionine binding"/>
    <property type="evidence" value="ECO:0007669"/>
    <property type="project" value="UniProtKB-UniRule"/>
</dbReference>
<dbReference type="GO" id="GO:0006777">
    <property type="term" value="P:Mo-molybdopterin cofactor biosynthetic process"/>
    <property type="evidence" value="ECO:0000318"/>
    <property type="project" value="GO_Central"/>
</dbReference>
<dbReference type="CDD" id="cd01335">
    <property type="entry name" value="Radical_SAM"/>
    <property type="match status" value="1"/>
</dbReference>
<dbReference type="CDD" id="cd21117">
    <property type="entry name" value="Twitch_MoaA"/>
    <property type="match status" value="1"/>
</dbReference>
<dbReference type="FunFam" id="3.20.20.70:FF:000057">
    <property type="entry name" value="GTP 3',8-cyclase"/>
    <property type="match status" value="1"/>
</dbReference>
<dbReference type="Gene3D" id="3.20.20.70">
    <property type="entry name" value="Aldolase class I"/>
    <property type="match status" value="1"/>
</dbReference>
<dbReference type="HAMAP" id="MF_01225_B">
    <property type="entry name" value="MoaA_B"/>
    <property type="match status" value="1"/>
</dbReference>
<dbReference type="InterPro" id="IPR013785">
    <property type="entry name" value="Aldolase_TIM"/>
</dbReference>
<dbReference type="InterPro" id="IPR006638">
    <property type="entry name" value="Elp3/MiaA/NifB-like_rSAM"/>
</dbReference>
<dbReference type="InterPro" id="IPR013483">
    <property type="entry name" value="MoaA"/>
</dbReference>
<dbReference type="InterPro" id="IPR000385">
    <property type="entry name" value="MoaA_NifB_PqqE_Fe-S-bd_CS"/>
</dbReference>
<dbReference type="InterPro" id="IPR010505">
    <property type="entry name" value="MoaA_twitch"/>
</dbReference>
<dbReference type="InterPro" id="IPR050105">
    <property type="entry name" value="MoCo_biosynth_MoaA/MoaC"/>
</dbReference>
<dbReference type="InterPro" id="IPR007197">
    <property type="entry name" value="rSAM"/>
</dbReference>
<dbReference type="NCBIfam" id="TIGR02666">
    <property type="entry name" value="moaA"/>
    <property type="match status" value="1"/>
</dbReference>
<dbReference type="PANTHER" id="PTHR22960:SF28">
    <property type="entry name" value="GTP 3',8-CYCLASE"/>
    <property type="match status" value="1"/>
</dbReference>
<dbReference type="PANTHER" id="PTHR22960">
    <property type="entry name" value="MOLYBDOPTERIN COFACTOR SYNTHESIS PROTEIN A"/>
    <property type="match status" value="1"/>
</dbReference>
<dbReference type="Pfam" id="PF13353">
    <property type="entry name" value="Fer4_12"/>
    <property type="match status" value="1"/>
</dbReference>
<dbReference type="Pfam" id="PF06463">
    <property type="entry name" value="Mob_synth_C"/>
    <property type="match status" value="1"/>
</dbReference>
<dbReference type="Pfam" id="PF04055">
    <property type="entry name" value="Radical_SAM"/>
    <property type="match status" value="1"/>
</dbReference>
<dbReference type="SFLD" id="SFLDG01383">
    <property type="entry name" value="cyclic_pyranopterin_phosphate"/>
    <property type="match status" value="1"/>
</dbReference>
<dbReference type="SFLD" id="SFLDG01386">
    <property type="entry name" value="main_SPASM_domain-containing"/>
    <property type="match status" value="1"/>
</dbReference>
<dbReference type="SMART" id="SM00729">
    <property type="entry name" value="Elp3"/>
    <property type="match status" value="1"/>
</dbReference>
<dbReference type="SUPFAM" id="SSF102114">
    <property type="entry name" value="Radical SAM enzymes"/>
    <property type="match status" value="1"/>
</dbReference>
<dbReference type="PROSITE" id="PS01305">
    <property type="entry name" value="MOAA_NIFB_PQQE"/>
    <property type="match status" value="1"/>
</dbReference>
<dbReference type="PROSITE" id="PS51918">
    <property type="entry name" value="RADICAL_SAM"/>
    <property type="match status" value="1"/>
</dbReference>
<sequence>MQSIPIKNVGESRLVDPFQRQYYYLRLSITDQCNFRCTYCLPDGYQPEANKPSFLTLKEITHLAQAFAEMGTEKIRLTGGEPTLRKDFISIAESITNIDGIRQLAVTTNGYRMAKDVADWKKAGITSINVSVDSLDPKMFHQITGINKFDDVMRGIDRAFEVGYNKVKVNSVLMKNLNDKEFEQFLAWVKDRPIQMRFIELMQTGEMDSFFDKFHLSGQVLADKLLKNGWTLQHKSHTDGPAKVFTHPDYAGEIGLIMPYEKNFCASCNRLRVSAKGKLHLCLFGEEGIELRDLLQSHEQQGILQARIFAALQGKREHHYLHIGDTGVRNHLASIGG</sequence>
<feature type="chain" id="PRO_0000152966" description="GTP 3',8-cyclase">
    <location>
        <begin position="1"/>
        <end position="337"/>
    </location>
</feature>
<feature type="domain" description="Radical SAM core" evidence="2">
    <location>
        <begin position="17"/>
        <end position="243"/>
    </location>
</feature>
<feature type="binding site" evidence="1">
    <location>
        <position position="26"/>
    </location>
    <ligand>
        <name>GTP</name>
        <dbReference type="ChEBI" id="CHEBI:37565"/>
    </ligand>
</feature>
<feature type="binding site" evidence="1">
    <location>
        <position position="33"/>
    </location>
    <ligand>
        <name>[4Fe-4S] cluster</name>
        <dbReference type="ChEBI" id="CHEBI:49883"/>
        <label>1</label>
        <note>4Fe-4S-S-AdoMet</note>
    </ligand>
</feature>
<feature type="binding site" evidence="1">
    <location>
        <position position="37"/>
    </location>
    <ligand>
        <name>[4Fe-4S] cluster</name>
        <dbReference type="ChEBI" id="CHEBI:49883"/>
        <label>1</label>
        <note>4Fe-4S-S-AdoMet</note>
    </ligand>
</feature>
<feature type="binding site" evidence="1">
    <location>
        <position position="39"/>
    </location>
    <ligand>
        <name>S-adenosyl-L-methionine</name>
        <dbReference type="ChEBI" id="CHEBI:59789"/>
    </ligand>
</feature>
<feature type="binding site" evidence="1">
    <location>
        <position position="40"/>
    </location>
    <ligand>
        <name>[4Fe-4S] cluster</name>
        <dbReference type="ChEBI" id="CHEBI:49883"/>
        <label>1</label>
        <note>4Fe-4S-S-AdoMet</note>
    </ligand>
</feature>
<feature type="binding site" evidence="1">
    <location>
        <position position="76"/>
    </location>
    <ligand>
        <name>GTP</name>
        <dbReference type="ChEBI" id="CHEBI:37565"/>
    </ligand>
</feature>
<feature type="binding site" evidence="1">
    <location>
        <position position="80"/>
    </location>
    <ligand>
        <name>S-adenosyl-L-methionine</name>
        <dbReference type="ChEBI" id="CHEBI:59789"/>
    </ligand>
</feature>
<feature type="binding site" evidence="1">
    <location>
        <position position="107"/>
    </location>
    <ligand>
        <name>GTP</name>
        <dbReference type="ChEBI" id="CHEBI:37565"/>
    </ligand>
</feature>
<feature type="binding site" evidence="1">
    <location>
        <position position="131"/>
    </location>
    <ligand>
        <name>S-adenosyl-L-methionine</name>
        <dbReference type="ChEBI" id="CHEBI:59789"/>
    </ligand>
</feature>
<feature type="binding site" evidence="1">
    <location>
        <position position="168"/>
    </location>
    <ligand>
        <name>GTP</name>
        <dbReference type="ChEBI" id="CHEBI:37565"/>
    </ligand>
</feature>
<feature type="binding site" evidence="1">
    <location>
        <position position="202"/>
    </location>
    <ligand>
        <name>S-adenosyl-L-methionine</name>
        <dbReference type="ChEBI" id="CHEBI:59789"/>
    </ligand>
</feature>
<feature type="binding site" evidence="1">
    <location>
        <position position="265"/>
    </location>
    <ligand>
        <name>[4Fe-4S] cluster</name>
        <dbReference type="ChEBI" id="CHEBI:49883"/>
        <label>2</label>
        <note>4Fe-4S-substrate</note>
    </ligand>
</feature>
<feature type="binding site" evidence="1">
    <location>
        <position position="268"/>
    </location>
    <ligand>
        <name>[4Fe-4S] cluster</name>
        <dbReference type="ChEBI" id="CHEBI:49883"/>
        <label>2</label>
        <note>4Fe-4S-substrate</note>
    </ligand>
</feature>
<feature type="binding site" evidence="1">
    <location>
        <begin position="270"/>
        <end position="272"/>
    </location>
    <ligand>
        <name>GTP</name>
        <dbReference type="ChEBI" id="CHEBI:37565"/>
    </ligand>
</feature>
<feature type="binding site" evidence="1">
    <location>
        <position position="282"/>
    </location>
    <ligand>
        <name>[4Fe-4S] cluster</name>
        <dbReference type="ChEBI" id="CHEBI:49883"/>
        <label>2</label>
        <note>4Fe-4S-substrate</note>
    </ligand>
</feature>
<comment type="function">
    <text evidence="1">Catalyzes the cyclization of GTP to (8S)-3',8-cyclo-7,8-dihydroguanosine 5'-triphosphate.</text>
</comment>
<comment type="catalytic activity">
    <reaction evidence="1">
        <text>GTP + AH2 + S-adenosyl-L-methionine = (8S)-3',8-cyclo-7,8-dihydroguanosine 5'-triphosphate + 5'-deoxyadenosine + L-methionine + A + H(+)</text>
        <dbReference type="Rhea" id="RHEA:49576"/>
        <dbReference type="ChEBI" id="CHEBI:13193"/>
        <dbReference type="ChEBI" id="CHEBI:15378"/>
        <dbReference type="ChEBI" id="CHEBI:17319"/>
        <dbReference type="ChEBI" id="CHEBI:17499"/>
        <dbReference type="ChEBI" id="CHEBI:37565"/>
        <dbReference type="ChEBI" id="CHEBI:57844"/>
        <dbReference type="ChEBI" id="CHEBI:59789"/>
        <dbReference type="ChEBI" id="CHEBI:131766"/>
        <dbReference type="EC" id="4.1.99.22"/>
    </reaction>
</comment>
<comment type="cofactor">
    <cofactor evidence="1">
        <name>[4Fe-4S] cluster</name>
        <dbReference type="ChEBI" id="CHEBI:49883"/>
    </cofactor>
    <text evidence="1">Binds 2 [4Fe-4S] clusters. Binds 1 [4Fe-4S] cluster coordinated with 3 cysteines and an exchangeable S-adenosyl-L-methionine and 1 [4Fe-4S] cluster coordinated with 3 cysteines and the GTP-derived substrate.</text>
</comment>
<comment type="pathway">
    <text evidence="1">Cofactor biosynthesis; molybdopterin biosynthesis.</text>
</comment>
<comment type="subunit">
    <text evidence="1">Monomer and homodimer.</text>
</comment>
<comment type="similarity">
    <text evidence="1">Belongs to the radical SAM superfamily. MoaA family.</text>
</comment>
<keyword id="KW-0004">4Fe-4S</keyword>
<keyword id="KW-0342">GTP-binding</keyword>
<keyword id="KW-0408">Iron</keyword>
<keyword id="KW-0411">Iron-sulfur</keyword>
<keyword id="KW-0456">Lyase</keyword>
<keyword id="KW-0479">Metal-binding</keyword>
<keyword id="KW-0501">Molybdenum cofactor biosynthesis</keyword>
<keyword id="KW-0547">Nucleotide-binding</keyword>
<keyword id="KW-1185">Reference proteome</keyword>
<keyword id="KW-0949">S-adenosyl-L-methionine</keyword>
<evidence type="ECO:0000255" key="1">
    <source>
        <dbReference type="HAMAP-Rule" id="MF_01225"/>
    </source>
</evidence>
<evidence type="ECO:0000255" key="2">
    <source>
        <dbReference type="PROSITE-ProRule" id="PRU01266"/>
    </source>
</evidence>